<keyword id="KW-0002">3D-structure</keyword>
<keyword id="KW-0042">Antenna complex</keyword>
<keyword id="KW-0089">Bile pigment</keyword>
<keyword id="KW-0150">Chloroplast</keyword>
<keyword id="KW-0157">Chromophore</keyword>
<keyword id="KW-0249">Electron transport</keyword>
<keyword id="KW-0472">Membrane</keyword>
<keyword id="KW-0602">Photosynthesis</keyword>
<keyword id="KW-0605">Phycobilisome</keyword>
<keyword id="KW-0934">Plastid</keyword>
<keyword id="KW-0793">Thylakoid</keyword>
<keyword id="KW-0813">Transport</keyword>
<comment type="function">
    <text evidence="1">Light-harvesting photosynthetic tetrapyrrole chromophore-protein from the phycobiliprotein complex (phycobilisome, PBS). Phycocyanin is the major phycobiliprotein in the PBS rod.</text>
</comment>
<comment type="subunit">
    <text evidence="1">Heterododecamer of 6 alpha and 6 beta chains. The basic functional unit of phycobiliproteins is a ring-shaped hexamer formed from two back-to-back trimers contacting via the alpha chain subunits. The trimers are composed of alpha/beta subunit heterodimers arranged around a three-fold axis of symmetry. The phycoerythrins also contain a gamma subunit which is located in the center of the hexamer.</text>
</comment>
<comment type="subcellular location">
    <subcellularLocation>
        <location>Plastid</location>
        <location>Chloroplast thylakoid membrane</location>
        <topology>Peripheral membrane protein</topology>
        <orientation>Stromal side</orientation>
    </subcellularLocation>
    <text>Part of the phycobilisome rod.</text>
</comment>
<comment type="PTM">
    <text evidence="1">Contains one covalently linked phycocyanobilin chromophore.</text>
</comment>
<comment type="miscellaneous">
    <text>The light-harvesting antenna system in red algae and cyanobacteria is formed of phycobilisomes. These are composed of the phycobiliproteins phycoerythrin (CPE), phycocyanin (CPC) and allophycocyanin (APC). Cyanobacteria also contain phycoerythrocyanin (PCC). The phycobiliproteins all share the same subunit composition and organization with variations in the covalently bound open-chain tetrapyrrole chromophores. The phycobiliprotein complexes are arranged sequentially in antenna complexes linked by linker proteins with CPE at the periphery, CPC in the middle and APC at the core feeding to the photosynthetic reaction center.</text>
</comment>
<comment type="similarity">
    <text evidence="2">Belongs to the phycobiliprotein family.</text>
</comment>
<dbReference type="PDB" id="1F99">
    <property type="method" value="X-ray"/>
    <property type="resolution" value="2.40 A"/>
    <property type="chains" value="A/K/M=1-162"/>
</dbReference>
<dbReference type="PDBsum" id="1F99"/>
<dbReference type="SMR" id="P59858"/>
<dbReference type="EvolutionaryTrace" id="P59858"/>
<dbReference type="GO" id="GO:0009535">
    <property type="term" value="C:chloroplast thylakoid membrane"/>
    <property type="evidence" value="ECO:0007669"/>
    <property type="project" value="UniProtKB-SubCell"/>
</dbReference>
<dbReference type="GO" id="GO:0030089">
    <property type="term" value="C:phycobilisome"/>
    <property type="evidence" value="ECO:0007669"/>
    <property type="project" value="UniProtKB-KW"/>
</dbReference>
<dbReference type="GO" id="GO:0015979">
    <property type="term" value="P:photosynthesis"/>
    <property type="evidence" value="ECO:0007669"/>
    <property type="project" value="UniProtKB-KW"/>
</dbReference>
<dbReference type="CDD" id="cd14770">
    <property type="entry name" value="PC-PEC_alpha"/>
    <property type="match status" value="1"/>
</dbReference>
<dbReference type="Gene3D" id="1.10.490.20">
    <property type="entry name" value="Phycocyanins"/>
    <property type="match status" value="1"/>
</dbReference>
<dbReference type="InterPro" id="IPR009050">
    <property type="entry name" value="Globin-like_sf"/>
</dbReference>
<dbReference type="InterPro" id="IPR012128">
    <property type="entry name" value="Phycobilisome_asu/bsu"/>
</dbReference>
<dbReference type="InterPro" id="IPR038719">
    <property type="entry name" value="Phycobilisome_asu/bsu_sf"/>
</dbReference>
<dbReference type="InterPro" id="IPR006246">
    <property type="entry name" value="Phycocyanin_a"/>
</dbReference>
<dbReference type="NCBIfam" id="TIGR01338">
    <property type="entry name" value="phycocy_alpha"/>
    <property type="match status" value="1"/>
</dbReference>
<dbReference type="PANTHER" id="PTHR34011:SF4">
    <property type="entry name" value="C-PHYCOCYANIN ALPHA SUBUNIT"/>
    <property type="match status" value="1"/>
</dbReference>
<dbReference type="PANTHER" id="PTHR34011">
    <property type="entry name" value="PHYCOBILISOME 32.1 KDA LINKER POLYPEPTIDE, PHYCOCYANIN-ASSOCIATED, ROD 2-RELATED"/>
    <property type="match status" value="1"/>
</dbReference>
<dbReference type="Pfam" id="PF00502">
    <property type="entry name" value="Phycobilisome"/>
    <property type="match status" value="1"/>
</dbReference>
<dbReference type="PIRSF" id="PIRSF000081">
    <property type="entry name" value="Phycocyanin"/>
    <property type="match status" value="1"/>
</dbReference>
<dbReference type="SUPFAM" id="SSF46458">
    <property type="entry name" value="Globin-like"/>
    <property type="match status" value="1"/>
</dbReference>
<feature type="chain" id="PRO_0000199135" description="R-phycocyanin alpha chain">
    <location>
        <begin position="1"/>
        <end position="162"/>
    </location>
</feature>
<feature type="binding site">
    <location>
        <begin position="83"/>
        <end position="87"/>
    </location>
    <ligand>
        <name>(2R,3E)-phycocyanobilin</name>
        <dbReference type="ChEBI" id="CHEBI:85275"/>
    </ligand>
</feature>
<feature type="binding site" description="covalent" evidence="1">
    <location>
        <position position="84"/>
    </location>
    <ligand>
        <name>(2R,3E)-phycocyanobilin</name>
        <dbReference type="ChEBI" id="CHEBI:85275"/>
    </ligand>
</feature>
<feature type="binding site">
    <location>
        <begin position="115"/>
        <end position="124"/>
    </location>
    <ligand>
        <name>(2R,3E)-phycocyanobilin</name>
        <dbReference type="ChEBI" id="CHEBI:85275"/>
    </ligand>
</feature>
<feature type="helix" evidence="3">
    <location>
        <begin position="4"/>
        <end position="14"/>
    </location>
</feature>
<feature type="helix" evidence="3">
    <location>
        <begin position="21"/>
        <end position="46"/>
    </location>
</feature>
<feature type="helix" evidence="3">
    <location>
        <begin position="48"/>
        <end position="62"/>
    </location>
</feature>
<feature type="helix" evidence="3">
    <location>
        <begin position="65"/>
        <end position="68"/>
    </location>
</feature>
<feature type="strand" evidence="3">
    <location>
        <begin position="74"/>
        <end position="77"/>
    </location>
</feature>
<feature type="helix" evidence="3">
    <location>
        <begin position="78"/>
        <end position="101"/>
    </location>
</feature>
<feature type="helix" evidence="3">
    <location>
        <begin position="105"/>
        <end position="110"/>
    </location>
</feature>
<feature type="turn" evidence="3">
    <location>
        <begin position="111"/>
        <end position="114"/>
    </location>
</feature>
<feature type="helix" evidence="3">
    <location>
        <begin position="115"/>
        <end position="121"/>
    </location>
</feature>
<feature type="helix" evidence="3">
    <location>
        <begin position="126"/>
        <end position="139"/>
    </location>
</feature>
<feature type="helix" evidence="3">
    <location>
        <begin position="144"/>
        <end position="161"/>
    </location>
</feature>
<evidence type="ECO:0000269" key="1">
    <source>
    </source>
</evidence>
<evidence type="ECO:0000305" key="2"/>
<evidence type="ECO:0007829" key="3">
    <source>
        <dbReference type="PDB" id="1F99"/>
    </source>
</evidence>
<proteinExistence type="evidence at protein level"/>
<name>PHCA_POLUR</name>
<accession>P59858</accession>
<sequence>MKTPLTEAIAAADSQGRFLSNTELQVVNGRYNRATSSLEAAKALTANADRLISGAANAVYSKFPYTTQMPGPNYSSTAIGKAKCARDIGYYLRMVTYCLVVGGTGPMDDYLVAGLEEINRTFELSPSWYIEALKYIKNNHGLSGDVANEANTYIDYAINTLS</sequence>
<organism>
    <name type="scientific">Polysiphonia urceolata</name>
    <name type="common">Red alga</name>
    <name type="synonym">Conferva urceolata</name>
    <dbReference type="NCBI Taxonomy" id="173545"/>
    <lineage>
        <taxon>Eukaryota</taxon>
        <taxon>Rhodophyta</taxon>
        <taxon>Florideophyceae</taxon>
        <taxon>Rhodymeniophycidae</taxon>
        <taxon>Ceramiales</taxon>
        <taxon>Rhodomelaceae</taxon>
        <taxon>Polysiphonioideae</taxon>
        <taxon>Polysiphonia</taxon>
    </lineage>
</organism>
<geneLocation type="chloroplast"/>
<protein>
    <recommendedName>
        <fullName>R-phycocyanin alpha chain</fullName>
    </recommendedName>
</protein>
<gene>
    <name type="primary">rpcA</name>
</gene>
<reference key="1">
    <citation type="journal article" date="2001" name="Biophys. J.">
        <title>Crystal structure of R-phycocyanin and possible energy transfer pathways in the phycobilisome.</title>
        <authorList>
            <person name="Jiang T."/>
            <person name="Zhang J.P."/>
            <person name="Chang W.R."/>
            <person name="Liang D.C."/>
        </authorList>
    </citation>
    <scope>X-RAY CRYSTALLOGRAPHY (2.4 ANGSTROMS) IN COMPLEX WITH RPCB AND PHYCOCYANOBILIN</scope>
    <scope>FUNCTION</scope>
    <scope>SUBUNIT</scope>
</reference>